<gene>
    <name evidence="1" type="primary">rexB</name>
    <name type="ordered locus">LAR_0047</name>
</gene>
<name>ADDB_LIMRJ</name>
<protein>
    <recommendedName>
        <fullName evidence="1">ATP-dependent helicase/deoxyribonuclease subunit B</fullName>
        <ecNumber evidence="1">3.1.-.-</ecNumber>
    </recommendedName>
    <alternativeName>
        <fullName evidence="1">ATP-dependent helicase/nuclease subunit RexB</fullName>
    </alternativeName>
</protein>
<feature type="chain" id="PRO_0000379377" description="ATP-dependent helicase/deoxyribonuclease subunit B">
    <location>
        <begin position="1"/>
        <end position="1260"/>
    </location>
</feature>
<reference key="1">
    <citation type="journal article" date="2008" name="DNA Res.">
        <title>Comparative genome analysis of Lactobacillus reuteri and Lactobacillus fermentum reveal a genomic island for reuterin and cobalamin production.</title>
        <authorList>
            <person name="Morita H."/>
            <person name="Toh H."/>
            <person name="Fukuda S."/>
            <person name="Horikawa H."/>
            <person name="Oshima K."/>
            <person name="Suzuki T."/>
            <person name="Murakami M."/>
            <person name="Hisamatsu S."/>
            <person name="Kato Y."/>
            <person name="Takizawa T."/>
            <person name="Fukuoka H."/>
            <person name="Yoshimura T."/>
            <person name="Itoh K."/>
            <person name="O'Sullivan D.J."/>
            <person name="McKay L.L."/>
            <person name="Ohno H."/>
            <person name="Kikuchi J."/>
            <person name="Masaoka T."/>
            <person name="Hattori M."/>
        </authorList>
    </citation>
    <scope>NUCLEOTIDE SEQUENCE [LARGE SCALE GENOMIC DNA]</scope>
    <source>
        <strain>JCM 1112</strain>
    </source>
</reference>
<evidence type="ECO:0000255" key="1">
    <source>
        <dbReference type="HAMAP-Rule" id="MF_01453"/>
    </source>
</evidence>
<dbReference type="EC" id="3.1.-.-" evidence="1"/>
<dbReference type="EMBL" id="AP007281">
    <property type="protein sequence ID" value="BAG24563.1"/>
    <property type="molecule type" value="Genomic_DNA"/>
</dbReference>
<dbReference type="RefSeq" id="WP_003669564.1">
    <property type="nucleotide sequence ID" value="NC_010609.1"/>
</dbReference>
<dbReference type="SMR" id="B2G531"/>
<dbReference type="KEGG" id="lrf:LAR_0047"/>
<dbReference type="HOGENOM" id="CLU_007838_0_0_9"/>
<dbReference type="GO" id="GO:0008409">
    <property type="term" value="F:5'-3' exonuclease activity"/>
    <property type="evidence" value="ECO:0007669"/>
    <property type="project" value="UniProtKB-UniRule"/>
</dbReference>
<dbReference type="GO" id="GO:0005524">
    <property type="term" value="F:ATP binding"/>
    <property type="evidence" value="ECO:0007669"/>
    <property type="project" value="UniProtKB-UniRule"/>
</dbReference>
<dbReference type="GO" id="GO:0003690">
    <property type="term" value="F:double-stranded DNA binding"/>
    <property type="evidence" value="ECO:0007669"/>
    <property type="project" value="UniProtKB-UniRule"/>
</dbReference>
<dbReference type="GO" id="GO:0004386">
    <property type="term" value="F:helicase activity"/>
    <property type="evidence" value="ECO:0007669"/>
    <property type="project" value="UniProtKB-KW"/>
</dbReference>
<dbReference type="GO" id="GO:0016817">
    <property type="term" value="F:hydrolase activity, acting on acid anhydrides"/>
    <property type="evidence" value="ECO:0007669"/>
    <property type="project" value="InterPro"/>
</dbReference>
<dbReference type="GO" id="GO:0000724">
    <property type="term" value="P:double-strand break repair via homologous recombination"/>
    <property type="evidence" value="ECO:0007669"/>
    <property type="project" value="UniProtKB-UniRule"/>
</dbReference>
<dbReference type="Gene3D" id="3.90.320.10">
    <property type="match status" value="1"/>
</dbReference>
<dbReference type="Gene3D" id="3.40.50.300">
    <property type="entry name" value="P-loop containing nucleotide triphosphate hydrolases"/>
    <property type="match status" value="3"/>
</dbReference>
<dbReference type="HAMAP" id="MF_01453">
    <property type="entry name" value="AddB_type2"/>
    <property type="match status" value="1"/>
</dbReference>
<dbReference type="InterPro" id="IPR049035">
    <property type="entry name" value="ADDB_N"/>
</dbReference>
<dbReference type="InterPro" id="IPR014141">
    <property type="entry name" value="DNA_helicase_suRexB"/>
</dbReference>
<dbReference type="InterPro" id="IPR027417">
    <property type="entry name" value="P-loop_NTPase"/>
</dbReference>
<dbReference type="InterPro" id="IPR011604">
    <property type="entry name" value="PDDEXK-like_dom_sf"/>
</dbReference>
<dbReference type="InterPro" id="IPR038726">
    <property type="entry name" value="PDDEXK_AddAB-type"/>
</dbReference>
<dbReference type="PANTHER" id="PTHR30591">
    <property type="entry name" value="RECBCD ENZYME SUBUNIT RECC"/>
    <property type="match status" value="1"/>
</dbReference>
<dbReference type="PANTHER" id="PTHR30591:SF1">
    <property type="entry name" value="RECBCD ENZYME SUBUNIT RECC"/>
    <property type="match status" value="1"/>
</dbReference>
<dbReference type="Pfam" id="PF21445">
    <property type="entry name" value="ADDB_N"/>
    <property type="match status" value="1"/>
</dbReference>
<dbReference type="Pfam" id="PF12705">
    <property type="entry name" value="PDDEXK_1"/>
    <property type="match status" value="1"/>
</dbReference>
<dbReference type="SUPFAM" id="SSF52540">
    <property type="entry name" value="P-loop containing nucleoside triphosphate hydrolases"/>
    <property type="match status" value="1"/>
</dbReference>
<organism>
    <name type="scientific">Limosilactobacillus reuteri subsp. reuteri (strain JCM 1112)</name>
    <name type="common">Lactobacillus reuteri</name>
    <dbReference type="NCBI Taxonomy" id="557433"/>
    <lineage>
        <taxon>Bacteria</taxon>
        <taxon>Bacillati</taxon>
        <taxon>Bacillota</taxon>
        <taxon>Bacilli</taxon>
        <taxon>Lactobacillales</taxon>
        <taxon>Lactobacillaceae</taxon>
        <taxon>Limosilactobacillus</taxon>
    </lineage>
</organism>
<comment type="function">
    <text evidence="1">The heterodimer acts as both an ATP-dependent DNA helicase and an ATP-dependent, dual-direction single-stranded exonuclease. Recognizes the chi site generating a DNA molecule suitable for the initiation of homologous recombination. This subunit has 5' -&gt; 3' nuclease activity but not helicase activity.</text>
</comment>
<comment type="cofactor">
    <cofactor evidence="1">
        <name>Mg(2+)</name>
        <dbReference type="ChEBI" id="CHEBI:18420"/>
    </cofactor>
</comment>
<comment type="subunit">
    <text evidence="1">Heterodimer of AddA and RexB.</text>
</comment>
<comment type="miscellaneous">
    <text evidence="1">Despite having helicase-like domains, this subunit does not have helicase activity.</text>
</comment>
<comment type="similarity">
    <text evidence="1">Belongs to the helicase family. AddB/RexB type 2 subfamily.</text>
</comment>
<proteinExistence type="inferred from homology"/>
<keyword id="KW-0067">ATP-binding</keyword>
<keyword id="KW-0227">DNA damage</keyword>
<keyword id="KW-0234">DNA repair</keyword>
<keyword id="KW-0238">DNA-binding</keyword>
<keyword id="KW-0269">Exonuclease</keyword>
<keyword id="KW-0347">Helicase</keyword>
<keyword id="KW-0378">Hydrolase</keyword>
<keyword id="KW-0540">Nuclease</keyword>
<keyword id="KW-0547">Nucleotide-binding</keyword>
<accession>B2G531</accession>
<sequence>MGTLGFVLGTAAMDHQQVLIDQLVDQVKNTPADDTFYYLVPNHIKFETEINVLAGLRDRQGLSGSDRFASSRVQVLSFSRLAWYLLRDTPAFQKQHLSKIGMAMLTSQVVQEQASDLRLYASEVKQPGFIQKMTAQLEELKNANITADDLTDIIYRVKSANDPAANQAWLAKMYDVETIYHAYEARLRDRYIGNSELYRQLVSYLQKSPEVAKMHFFIDRFAQFTANEQQVVDALITNAASTTISLTLDRGYPDQNHPNPQELPPKNNLFYSSAMQFHRLWKFGQMHQKEVKVLQNVAFATTPRVDAELQQVDSYFKRYASEPIGPGEREELLDPQNIQFMTTTNRMTELNNVATQIRQLVASGKYRYRDFLILSRHLDGYQTMIEPVFAAHNIPVFNDHERLMDNHPLVTLLTTLLELPQRGYRTADIIQLLKTWLLVPRTGTGDLMGLSDFQAAVFTTENWCLKQAIEGKNAWTTNDPEKIKQLWQAPGTNLTDPKYEQSRLEKLNDQLALVKDFVANHLLPVFDQFKQAQTGQELATALYQFLAAMGVTDRLYAWQQYQSTRDLDLARQPQQVWTTFCQILQEYVEILGQQELRDGTNEVLADFSELLQAGFAAAQYSQIPATLDQVVVSETGIVQSENRKVVFMIGSTDDVMPEMQESDSLLTDQDKDILSAYLDEDFQYLPGTAIDQLIDEPFVHYTGFMNAKEQLIFSAPQSDSDDKELSISPYMHDMARYFGQPVREYPLATSKAGQDNAIDFVSAPLATINRLVEVSRQIRDEQGVGIDRQPVMPVGWQTVAESLVKLAKQWQQSADAKVQAEGISLGQRLSLVAAGFHYQNKIDSLGNKLAQALYLRAAPDDERGRVLYASISQLQDFYINQYEYFLKYGLRLQKRDELTLSNDRIGTFFHKAMETFVTTIRENNLSFADLAHKDNQMQRDQLIDHALVTAQENQPTLLRLINSSAQAQFQYQQLTAIVKTMLITLCRQAEYTGSQPVKTEVQFGRIGNQQPGNLGSLDYPLKDNHHIYLRGRIDRIDNLKQGNNNFLTVVDYKSSNHLFDLTSAYYGLSLQLLTYLNGLQANLTELETNNPRLAGALYLRLNNPTIKAAELKKSSLDDLKLKEHQYKGILLNDPQLLRELDKSLDKQAFLYPLKEYKNGKIKANKEALLVTPQQLDWLQNMNKELVINAGNQILSGDLKLNPYRLLTGSNRRTGLDYSDFLDVFQFDNMLDQQNYRDLNPNLAKEAFDNVVQDDDEEDKK</sequence>